<proteinExistence type="evidence at protein level"/>
<protein>
    <recommendedName>
        <fullName evidence="4">Cytochrome P450 monooxygenase polB</fullName>
        <ecNumber evidence="3">1.-.-.-</ecNumber>
    </recommendedName>
    <alternativeName>
        <fullName evidence="4">Polytolypin biosynthesis cluster protein B</fullName>
    </alternativeName>
</protein>
<feature type="chain" id="PRO_0000460595" description="Cytochrome P450 monooxygenase polB">
    <location>
        <begin position="1"/>
        <end position="528"/>
    </location>
</feature>
<feature type="transmembrane region" description="Helical" evidence="2">
    <location>
        <begin position="3"/>
        <end position="23"/>
    </location>
</feature>
<feature type="binding site" description="axial binding residue" evidence="1">
    <location>
        <position position="473"/>
    </location>
    <ligand>
        <name>heme</name>
        <dbReference type="ChEBI" id="CHEBI:30413"/>
    </ligand>
    <ligandPart>
        <name>Fe</name>
        <dbReference type="ChEBI" id="CHEBI:18248"/>
    </ligandPart>
</feature>
<name>POLB_POLH7</name>
<organism>
    <name type="scientific">Polytolypa hystricis (strain UAMH7299)</name>
    <dbReference type="NCBI Taxonomy" id="1447883"/>
    <lineage>
        <taxon>Eukaryota</taxon>
        <taxon>Fungi</taxon>
        <taxon>Dikarya</taxon>
        <taxon>Ascomycota</taxon>
        <taxon>Pezizomycotina</taxon>
        <taxon>Eurotiomycetes</taxon>
        <taxon>Eurotiomycetidae</taxon>
        <taxon>Onygenales</taxon>
        <taxon>Onygenales incertae sedis</taxon>
        <taxon>Polytolypa</taxon>
    </lineage>
</organism>
<evidence type="ECO:0000250" key="1">
    <source>
        <dbReference type="UniProtKB" id="P04798"/>
    </source>
</evidence>
<evidence type="ECO:0000255" key="2"/>
<evidence type="ECO:0000269" key="3">
    <source>
    </source>
</evidence>
<evidence type="ECO:0000303" key="4">
    <source>
    </source>
</evidence>
<evidence type="ECO:0000305" key="5"/>
<comment type="function">
    <text evidence="3">Cytochrome P450 monooxygenase; part of the gene cluster that mediates the biosynthesis of antifungal fernane-type triterpenoid polytolypin (PubMed:36602159). PolB acts as a hydroxylase and installs the 2-alpha-hydroxyl group in polytolypin (PubMed:36602159). Within the pathway, the triterpene cyclase polA first catalyzes the cyclization of 2,3-oxidosqualene to motiol, polC converts the 4-alpha-methyl group of motiol to a carboxyl group, polB is responsible for appending a hydroxyl group at the 2-alpha position and polE is a dual functional P450, which can catalyze the formation of both the 1-beta-hydroxyl group and 10-beta-carboxyl group (PubMed:36602159).</text>
</comment>
<comment type="catalytic activity">
    <reaction evidence="3">
        <text>4beta-carboxyl motiol + reduced [NADPH--hemoprotein reductase] + O2 = 2alpha-hydroxyl, 4beta-carboxyl motiol + oxidized [NADPH--hemoprotein reductase] + H2O + H(+)</text>
        <dbReference type="Rhea" id="RHEA:80223"/>
        <dbReference type="Rhea" id="RHEA-COMP:11964"/>
        <dbReference type="Rhea" id="RHEA-COMP:11965"/>
        <dbReference type="ChEBI" id="CHEBI:15377"/>
        <dbReference type="ChEBI" id="CHEBI:15378"/>
        <dbReference type="ChEBI" id="CHEBI:15379"/>
        <dbReference type="ChEBI" id="CHEBI:57618"/>
        <dbReference type="ChEBI" id="CHEBI:58210"/>
        <dbReference type="ChEBI" id="CHEBI:231459"/>
        <dbReference type="ChEBI" id="CHEBI:231460"/>
    </reaction>
    <physiologicalReaction direction="left-to-right" evidence="3">
        <dbReference type="Rhea" id="RHEA:80224"/>
    </physiologicalReaction>
</comment>
<comment type="catalytic activity">
    <reaction evidence="3">
        <text>2-deoxypolytolypin + reduced [NADPH--hemoprotein reductase] + O2 = polytolypin + oxidized [NADPH--hemoprotein reductase] + H2O + H(+)</text>
        <dbReference type="Rhea" id="RHEA:80235"/>
        <dbReference type="Rhea" id="RHEA-COMP:11964"/>
        <dbReference type="Rhea" id="RHEA-COMP:11965"/>
        <dbReference type="ChEBI" id="CHEBI:15377"/>
        <dbReference type="ChEBI" id="CHEBI:15378"/>
        <dbReference type="ChEBI" id="CHEBI:15379"/>
        <dbReference type="ChEBI" id="CHEBI:57618"/>
        <dbReference type="ChEBI" id="CHEBI:58210"/>
        <dbReference type="ChEBI" id="CHEBI:231461"/>
        <dbReference type="ChEBI" id="CHEBI:231462"/>
    </reaction>
    <physiologicalReaction direction="left-to-right" evidence="3">
        <dbReference type="Rhea" id="RHEA:80236"/>
    </physiologicalReaction>
</comment>
<comment type="cofactor">
    <cofactor evidence="1">
        <name>heme</name>
        <dbReference type="ChEBI" id="CHEBI:30413"/>
    </cofactor>
</comment>
<comment type="pathway">
    <text evidence="3">Secondary metabolite biosynthesis; terpenoid biosynthesis.</text>
</comment>
<comment type="subcellular location">
    <subcellularLocation>
        <location evidence="2">Membrane</location>
        <topology evidence="2">Single-pass membrane protein</topology>
    </subcellularLocation>
</comment>
<comment type="biotechnology">
    <text evidence="3">Polytolypin and biosynthesis intermediate compounds show antifungal activity and can efficiently inhibit the growth of the pathogenic funfus Candida albicans.</text>
</comment>
<comment type="similarity">
    <text evidence="5">Belongs to the cytochrome P450 family.</text>
</comment>
<reference key="1">
    <citation type="journal article" date="2018" name="Sci. Rep.">
        <title>Genome analysis reveals evolutionary mechanisms of adaptation in systemic dimorphic fungi.</title>
        <authorList>
            <person name="Munoz J.F."/>
            <person name="McEwen J.G."/>
            <person name="Clay O.K."/>
            <person name="Cuomo C.A."/>
        </authorList>
    </citation>
    <scope>NUCLEOTIDE SEQUENCE [LARGE SCALE GENOMIC DNA]</scope>
    <source>
        <strain>UAMH7299</strain>
    </source>
</reference>
<reference key="2">
    <citation type="journal article" date="2023" name="Org. Biomol. Chem.">
        <title>Biosynthetic characterization of the antifungal fernane-type triterpenoid polytolypin for generation of new analogues via combinatorial biosynthesis.</title>
        <authorList>
            <person name="Li X.Y."/>
            <person name="Lv J.M."/>
            <person name="Cao Z.Q."/>
            <person name="Wang G.Q."/>
            <person name="Lin F.L."/>
            <person name="Chen G.D."/>
            <person name="Qin S.Y."/>
            <person name="Hu D."/>
            <person name="Gao H."/>
            <person name="Yao X.S."/>
        </authorList>
    </citation>
    <scope>FUNCTION</scope>
    <scope>CATALYTIC ACTIVITY</scope>
    <scope>PATHWAY</scope>
    <scope>BIOTECHNOLOGY</scope>
</reference>
<dbReference type="EC" id="1.-.-.-" evidence="3"/>
<dbReference type="EMBL" id="PDNA01000047">
    <property type="protein sequence ID" value="PGH19456.1"/>
    <property type="molecule type" value="Genomic_DNA"/>
</dbReference>
<dbReference type="STRING" id="1447883.A0A2B7YD52"/>
<dbReference type="OrthoDB" id="1844152at2759"/>
<dbReference type="UniPathway" id="UPA00213"/>
<dbReference type="Proteomes" id="UP000224634">
    <property type="component" value="Unassembled WGS sequence"/>
</dbReference>
<dbReference type="GO" id="GO:0016020">
    <property type="term" value="C:membrane"/>
    <property type="evidence" value="ECO:0007669"/>
    <property type="project" value="UniProtKB-SubCell"/>
</dbReference>
<dbReference type="GO" id="GO:0020037">
    <property type="term" value="F:heme binding"/>
    <property type="evidence" value="ECO:0007669"/>
    <property type="project" value="InterPro"/>
</dbReference>
<dbReference type="GO" id="GO:0005506">
    <property type="term" value="F:iron ion binding"/>
    <property type="evidence" value="ECO:0007669"/>
    <property type="project" value="InterPro"/>
</dbReference>
<dbReference type="GO" id="GO:0004497">
    <property type="term" value="F:monooxygenase activity"/>
    <property type="evidence" value="ECO:0007669"/>
    <property type="project" value="UniProtKB-KW"/>
</dbReference>
<dbReference type="GO" id="GO:0016705">
    <property type="term" value="F:oxidoreductase activity, acting on paired donors, with incorporation or reduction of molecular oxygen"/>
    <property type="evidence" value="ECO:0007669"/>
    <property type="project" value="InterPro"/>
</dbReference>
<dbReference type="GO" id="GO:0019748">
    <property type="term" value="P:secondary metabolic process"/>
    <property type="evidence" value="ECO:0007669"/>
    <property type="project" value="UniProtKB-ARBA"/>
</dbReference>
<dbReference type="CDD" id="cd11041">
    <property type="entry name" value="CYP503A1-like"/>
    <property type="match status" value="1"/>
</dbReference>
<dbReference type="Gene3D" id="1.10.630.10">
    <property type="entry name" value="Cytochrome P450"/>
    <property type="match status" value="1"/>
</dbReference>
<dbReference type="InterPro" id="IPR001128">
    <property type="entry name" value="Cyt_P450"/>
</dbReference>
<dbReference type="InterPro" id="IPR002403">
    <property type="entry name" value="Cyt_P450_E_grp-IV"/>
</dbReference>
<dbReference type="InterPro" id="IPR036396">
    <property type="entry name" value="Cyt_P450_sf"/>
</dbReference>
<dbReference type="PANTHER" id="PTHR46206">
    <property type="entry name" value="CYTOCHROME P450"/>
    <property type="match status" value="1"/>
</dbReference>
<dbReference type="PANTHER" id="PTHR46206:SF1">
    <property type="entry name" value="P450, PUTATIVE (EUROFUNG)-RELATED"/>
    <property type="match status" value="1"/>
</dbReference>
<dbReference type="Pfam" id="PF00067">
    <property type="entry name" value="p450"/>
    <property type="match status" value="1"/>
</dbReference>
<dbReference type="PRINTS" id="PR00465">
    <property type="entry name" value="EP450IV"/>
</dbReference>
<dbReference type="SUPFAM" id="SSF48264">
    <property type="entry name" value="Cytochrome P450"/>
    <property type="match status" value="1"/>
</dbReference>
<keyword id="KW-0349">Heme</keyword>
<keyword id="KW-0408">Iron</keyword>
<keyword id="KW-0472">Membrane</keyword>
<keyword id="KW-0479">Metal-binding</keyword>
<keyword id="KW-0503">Monooxygenase</keyword>
<keyword id="KW-0560">Oxidoreductase</keyword>
<keyword id="KW-1185">Reference proteome</keyword>
<keyword id="KW-0812">Transmembrane</keyword>
<keyword id="KW-1133">Transmembrane helix</keyword>
<sequence length="528" mass="59182">MYSFFLVCPVAFLGFTICYLVYVELFPHPFPKSLPLVGFRKEIFSRPRASFRQILGSSQTLAEGYEQYGAAGRPYVVPDTTFQPQVMLPQNHIKWLSTQPESVLSSEAVRVERNGINYLPVKSDLKSSVLFIDKIIGKSLSQNLDLIQPDMYDEIRHTVDSTMGTDVASWREVNLSEAMSTIIDRTGNRILFGLSLCRNEVYLRILRCFIIFMGASTLLIGQLPPWFLRPIAGVLITIPTFIFKKLSVAYVRPLVKERMQSVSGEEDDQGPGKTSHDFVTQSINSVRKFKITIEGDVASYLAEQFLFLAFAAMATTGAAATNIFLDILSASPQINLYELLHLEAASIFKSEADWMSPSSMKEMINTDSAIRESLRKNTLQSRGLLKQVMPKDGIMLPDGAHVPHGMWLGVPAQAMQNDDEFYPNADGYDPLRFARLKADAEAECKDGPSSGKHLDAAHPSDKYLSFSYGRSSCPGRWFAVRLLKLIIAYIAVHYDIKPLAHRPKNFSFGDASIPSFTTKIMVRRRKQG</sequence>
<accession>A0A2B7YD52</accession>
<gene>
    <name evidence="4" type="primary">polB</name>
    <name type="ORF">AJ80_03957</name>
</gene>